<sequence>MISAKEQAKKGQIIYRYILLKIQSFKWPAGTRIFSERQLEIRFASSRSLIRTILNTLLGKDLIRHTKGNAGYFVAKNAGFSFFHKTQDNKLPKWAKLSTLMKNHLREVDRDVFSSIDSGVDFGNFKGLEAKLFDENKKNFLNLSFFGKDDVLQIFSEQNLQEQFFKDFAYNGIVVERKSSLICVDDETKNLLIYDLFYDDNNKFIVAMRSEYLNPRIKIINA</sequence>
<evidence type="ECO:0000255" key="1">
    <source>
        <dbReference type="PROSITE-ProRule" id="PRU00307"/>
    </source>
</evidence>
<protein>
    <recommendedName>
        <fullName>Uncharacterized HTH-type transcriptional regulator MG101 homolog</fullName>
    </recommendedName>
</protein>
<proteinExistence type="predicted"/>
<reference key="1">
    <citation type="journal article" date="1996" name="Nucleic Acids Res.">
        <title>Complete sequence analysis of the genome of the bacterium Mycoplasma pneumoniae.</title>
        <authorList>
            <person name="Himmelreich R."/>
            <person name="Hilbert H."/>
            <person name="Plagens H."/>
            <person name="Pirkl E."/>
            <person name="Li B.-C."/>
            <person name="Herrmann R."/>
        </authorList>
    </citation>
    <scope>NUCLEOTIDE SEQUENCE [LARGE SCALE GENOMIC DNA]</scope>
    <source>
        <strain>ATCC 29342 / M129 / Subtype 1</strain>
    </source>
</reference>
<organism>
    <name type="scientific">Mycoplasma pneumoniae (strain ATCC 29342 / M129 / Subtype 1)</name>
    <name type="common">Mycoplasmoides pneumoniae</name>
    <dbReference type="NCBI Taxonomy" id="272634"/>
    <lineage>
        <taxon>Bacteria</taxon>
        <taxon>Bacillati</taxon>
        <taxon>Mycoplasmatota</taxon>
        <taxon>Mycoplasmoidales</taxon>
        <taxon>Mycoplasmoidaceae</taxon>
        <taxon>Mycoplasmoides</taxon>
    </lineage>
</organism>
<accession>P75532</accession>
<name>Y239_MYCPN</name>
<feature type="chain" id="PRO_0000050694" description="Uncharacterized HTH-type transcriptional regulator MG101 homolog">
    <location>
        <begin position="1"/>
        <end position="222"/>
    </location>
</feature>
<feature type="domain" description="HTH gntR-type" evidence="1">
    <location>
        <begin position="8"/>
        <end position="77"/>
    </location>
</feature>
<dbReference type="EMBL" id="U00089">
    <property type="protein sequence ID" value="AAB96240.1"/>
    <property type="molecule type" value="Genomic_DNA"/>
</dbReference>
<dbReference type="PIR" id="S73918">
    <property type="entry name" value="S73918"/>
</dbReference>
<dbReference type="RefSeq" id="NP_109927.1">
    <property type="nucleotide sequence ID" value="NC_000912.1"/>
</dbReference>
<dbReference type="RefSeq" id="WP_010874596.1">
    <property type="nucleotide sequence ID" value="NZ_OU342337.1"/>
</dbReference>
<dbReference type="SMR" id="P75532"/>
<dbReference type="IntAct" id="P75532">
    <property type="interactions" value="1"/>
</dbReference>
<dbReference type="STRING" id="272634.MPN_239"/>
<dbReference type="EnsemblBacteria" id="AAB96240">
    <property type="protein sequence ID" value="AAB96240"/>
    <property type="gene ID" value="MPN_239"/>
</dbReference>
<dbReference type="KEGG" id="mpn:MPN_239"/>
<dbReference type="PATRIC" id="fig|272634.6.peg.258"/>
<dbReference type="HOGENOM" id="CLU_1081049_0_0_14"/>
<dbReference type="OrthoDB" id="397811at2"/>
<dbReference type="BioCyc" id="MPNE272634:G1GJ3-380-MONOMER"/>
<dbReference type="Proteomes" id="UP000000808">
    <property type="component" value="Chromosome"/>
</dbReference>
<dbReference type="GO" id="GO:0003677">
    <property type="term" value="F:DNA binding"/>
    <property type="evidence" value="ECO:0007669"/>
    <property type="project" value="UniProtKB-KW"/>
</dbReference>
<dbReference type="GO" id="GO:0003700">
    <property type="term" value="F:DNA-binding transcription factor activity"/>
    <property type="evidence" value="ECO:0007669"/>
    <property type="project" value="InterPro"/>
</dbReference>
<dbReference type="Gene3D" id="1.10.10.10">
    <property type="entry name" value="Winged helix-like DNA-binding domain superfamily/Winged helix DNA-binding domain"/>
    <property type="match status" value="1"/>
</dbReference>
<dbReference type="InterPro" id="IPR000524">
    <property type="entry name" value="Tscrpt_reg_HTH_GntR"/>
</dbReference>
<dbReference type="InterPro" id="IPR036388">
    <property type="entry name" value="WH-like_DNA-bd_sf"/>
</dbReference>
<dbReference type="InterPro" id="IPR036390">
    <property type="entry name" value="WH_DNA-bd_sf"/>
</dbReference>
<dbReference type="SUPFAM" id="SSF46785">
    <property type="entry name" value="Winged helix' DNA-binding domain"/>
    <property type="match status" value="1"/>
</dbReference>
<dbReference type="PROSITE" id="PS50949">
    <property type="entry name" value="HTH_GNTR"/>
    <property type="match status" value="1"/>
</dbReference>
<keyword id="KW-0238">DNA-binding</keyword>
<keyword id="KW-1185">Reference proteome</keyword>
<keyword id="KW-0804">Transcription</keyword>
<keyword id="KW-0805">Transcription regulation</keyword>
<gene>
    <name type="ordered locus">MPN_239</name>
    <name type="ORF">K04_orf222</name>
    <name type="ORF">MP592</name>
</gene>